<name>COAA_HAEIN</name>
<sequence length="311" mass="35907">MEFSTQQTPFLSFNREQWAELRKSVPLKLTEQDLKPLLGFNEDLSLDEVSTIYLPLTRLINYYIDENLHRQTVLHRFLGRNNAKTPYIISIAGSVAVGKSTSARILQSLLSHWPTERKVDLITTDGFLYPLNKLKQDNLLQKKGFPVSYDTPKLIRFLADVKSGKSNVTAPIYSHLTYDIIPDKFDVVDKPDILILEGLNVLQTGNNKTDQTFVSDFVDFSIYVDAEEKLLKEWYIKRFLKFRESAFNDPNSYFKHYASLSKEEAIATASKIWDEINGLNLNQNILPTRERANLILKKGHNHQVELIKLRK</sequence>
<comment type="catalytic activity">
    <reaction>
        <text>(R)-pantothenate + ATP = (R)-4'-phosphopantothenate + ADP + H(+)</text>
        <dbReference type="Rhea" id="RHEA:16373"/>
        <dbReference type="ChEBI" id="CHEBI:10986"/>
        <dbReference type="ChEBI" id="CHEBI:15378"/>
        <dbReference type="ChEBI" id="CHEBI:29032"/>
        <dbReference type="ChEBI" id="CHEBI:30616"/>
        <dbReference type="ChEBI" id="CHEBI:456216"/>
        <dbReference type="EC" id="2.7.1.33"/>
    </reaction>
</comment>
<comment type="pathway">
    <text>Cofactor biosynthesis; coenzyme A biosynthesis; CoA from (R)-pantothenate: step 1/5.</text>
</comment>
<comment type="subcellular location">
    <subcellularLocation>
        <location evidence="1">Cytoplasm</location>
    </subcellularLocation>
</comment>
<comment type="similarity">
    <text evidence="3">Belongs to the prokaryotic pantothenate kinase family.</text>
</comment>
<dbReference type="EC" id="2.7.1.33"/>
<dbReference type="EMBL" id="L42023">
    <property type="protein sequence ID" value="AAC22291.1"/>
    <property type="molecule type" value="Genomic_DNA"/>
</dbReference>
<dbReference type="PIR" id="I64082">
    <property type="entry name" value="I64082"/>
</dbReference>
<dbReference type="RefSeq" id="NP_438791.1">
    <property type="nucleotide sequence ID" value="NC_000907.1"/>
</dbReference>
<dbReference type="SMR" id="P44793"/>
<dbReference type="STRING" id="71421.HI_0631"/>
<dbReference type="EnsemblBacteria" id="AAC22291">
    <property type="protein sequence ID" value="AAC22291"/>
    <property type="gene ID" value="HI_0631"/>
</dbReference>
<dbReference type="KEGG" id="hin:HI_0631"/>
<dbReference type="PATRIC" id="fig|71421.8.peg.657"/>
<dbReference type="eggNOG" id="COG1072">
    <property type="taxonomic scope" value="Bacteria"/>
</dbReference>
<dbReference type="HOGENOM" id="CLU_053818_1_1_6"/>
<dbReference type="OrthoDB" id="1550976at2"/>
<dbReference type="PhylomeDB" id="P44793"/>
<dbReference type="BioCyc" id="HINF71421:G1GJ1-658-MONOMER"/>
<dbReference type="UniPathway" id="UPA00241">
    <property type="reaction ID" value="UER00352"/>
</dbReference>
<dbReference type="Proteomes" id="UP000000579">
    <property type="component" value="Chromosome"/>
</dbReference>
<dbReference type="GO" id="GO:0005737">
    <property type="term" value="C:cytoplasm"/>
    <property type="evidence" value="ECO:0000318"/>
    <property type="project" value="GO_Central"/>
</dbReference>
<dbReference type="GO" id="GO:0005524">
    <property type="term" value="F:ATP binding"/>
    <property type="evidence" value="ECO:0007669"/>
    <property type="project" value="UniProtKB-UniRule"/>
</dbReference>
<dbReference type="GO" id="GO:0004594">
    <property type="term" value="F:pantothenate kinase activity"/>
    <property type="evidence" value="ECO:0000318"/>
    <property type="project" value="GO_Central"/>
</dbReference>
<dbReference type="GO" id="GO:0015937">
    <property type="term" value="P:coenzyme A biosynthetic process"/>
    <property type="evidence" value="ECO:0000318"/>
    <property type="project" value="GO_Central"/>
</dbReference>
<dbReference type="CDD" id="cd02025">
    <property type="entry name" value="PanK"/>
    <property type="match status" value="1"/>
</dbReference>
<dbReference type="FunFam" id="3.40.50.300:FF:000242">
    <property type="entry name" value="Pantothenate kinase"/>
    <property type="match status" value="1"/>
</dbReference>
<dbReference type="Gene3D" id="3.40.50.300">
    <property type="entry name" value="P-loop containing nucleotide triphosphate hydrolases"/>
    <property type="match status" value="1"/>
</dbReference>
<dbReference type="HAMAP" id="MF_00215">
    <property type="entry name" value="Pantothen_kinase_1"/>
    <property type="match status" value="1"/>
</dbReference>
<dbReference type="InterPro" id="IPR027417">
    <property type="entry name" value="P-loop_NTPase"/>
</dbReference>
<dbReference type="InterPro" id="IPR004566">
    <property type="entry name" value="PanK"/>
</dbReference>
<dbReference type="InterPro" id="IPR006083">
    <property type="entry name" value="PRK/URK"/>
</dbReference>
<dbReference type="NCBIfam" id="TIGR00554">
    <property type="entry name" value="panK_bact"/>
    <property type="match status" value="1"/>
</dbReference>
<dbReference type="PANTHER" id="PTHR10285">
    <property type="entry name" value="URIDINE KINASE"/>
    <property type="match status" value="1"/>
</dbReference>
<dbReference type="Pfam" id="PF00485">
    <property type="entry name" value="PRK"/>
    <property type="match status" value="1"/>
</dbReference>
<dbReference type="PIRSF" id="PIRSF000545">
    <property type="entry name" value="Pantothenate_kin"/>
    <property type="match status" value="1"/>
</dbReference>
<dbReference type="SUPFAM" id="SSF52540">
    <property type="entry name" value="P-loop containing nucleoside triphosphate hydrolases"/>
    <property type="match status" value="1"/>
</dbReference>
<proteinExistence type="inferred from homology"/>
<accession>P44793</accession>
<evidence type="ECO:0000250" key="1"/>
<evidence type="ECO:0000255" key="2"/>
<evidence type="ECO:0000305" key="3"/>
<reference key="1">
    <citation type="journal article" date="1991" name="Gene">
        <title>Nucleotide sequence of a cluster of genes involved in the transformation of Haemophilus influenzae Rd.</title>
        <authorList>
            <person name="Tomb J.-F."/>
            <person name="El-Hajj H."/>
            <person name="Smith H.O."/>
        </authorList>
    </citation>
    <scope>NUCLEOTIDE SEQUENCE [GENOMIC DNA]</scope>
    <source>
        <strain>ATCC 51907 / DSM 11121 / KW20 / Rd</strain>
    </source>
</reference>
<reference key="2">
    <citation type="journal article" date="1995" name="Science">
        <title>Whole-genome random sequencing and assembly of Haemophilus influenzae Rd.</title>
        <authorList>
            <person name="Fleischmann R.D."/>
            <person name="Adams M.D."/>
            <person name="White O."/>
            <person name="Clayton R.A."/>
            <person name="Kirkness E.F."/>
            <person name="Kerlavage A.R."/>
            <person name="Bult C.J."/>
            <person name="Tomb J.-F."/>
            <person name="Dougherty B.A."/>
            <person name="Merrick J.M."/>
            <person name="McKenney K."/>
            <person name="Sutton G.G."/>
            <person name="FitzHugh W."/>
            <person name="Fields C.A."/>
            <person name="Gocayne J.D."/>
            <person name="Scott J.D."/>
            <person name="Shirley R."/>
            <person name="Liu L.-I."/>
            <person name="Glodek A."/>
            <person name="Kelley J.M."/>
            <person name="Weidman J.F."/>
            <person name="Phillips C.A."/>
            <person name="Spriggs T."/>
            <person name="Hedblom E."/>
            <person name="Cotton M.D."/>
            <person name="Utterback T.R."/>
            <person name="Hanna M.C."/>
            <person name="Nguyen D.T."/>
            <person name="Saudek D.M."/>
            <person name="Brandon R.C."/>
            <person name="Fine L.D."/>
            <person name="Fritchman J.L."/>
            <person name="Fuhrmann J.L."/>
            <person name="Geoghagen N.S.M."/>
            <person name="Gnehm C.L."/>
            <person name="McDonald L.A."/>
            <person name="Small K.V."/>
            <person name="Fraser C.M."/>
            <person name="Smith H.O."/>
            <person name="Venter J.C."/>
        </authorList>
    </citation>
    <scope>NUCLEOTIDE SEQUENCE [LARGE SCALE GENOMIC DNA]</scope>
    <source>
        <strain>ATCC 51907 / DSM 11121 / KW20 / Rd</strain>
    </source>
</reference>
<feature type="chain" id="PRO_0000194431" description="Pantothenate kinase">
    <location>
        <begin position="1"/>
        <end position="311"/>
    </location>
</feature>
<feature type="binding site" evidence="2">
    <location>
        <begin position="93"/>
        <end position="100"/>
    </location>
    <ligand>
        <name>ATP</name>
        <dbReference type="ChEBI" id="CHEBI:30616"/>
    </ligand>
</feature>
<organism>
    <name type="scientific">Haemophilus influenzae (strain ATCC 51907 / DSM 11121 / KW20 / Rd)</name>
    <dbReference type="NCBI Taxonomy" id="71421"/>
    <lineage>
        <taxon>Bacteria</taxon>
        <taxon>Pseudomonadati</taxon>
        <taxon>Pseudomonadota</taxon>
        <taxon>Gammaproteobacteria</taxon>
        <taxon>Pasteurellales</taxon>
        <taxon>Pasteurellaceae</taxon>
        <taxon>Haemophilus</taxon>
    </lineage>
</organism>
<keyword id="KW-0067">ATP-binding</keyword>
<keyword id="KW-0173">Coenzyme A biosynthesis</keyword>
<keyword id="KW-0963">Cytoplasm</keyword>
<keyword id="KW-0418">Kinase</keyword>
<keyword id="KW-0547">Nucleotide-binding</keyword>
<keyword id="KW-1185">Reference proteome</keyword>
<keyword id="KW-0808">Transferase</keyword>
<protein>
    <recommendedName>
        <fullName>Pantothenate kinase</fullName>
        <ecNumber>2.7.1.33</ecNumber>
    </recommendedName>
    <alternativeName>
        <fullName>Pantothenic acid kinase</fullName>
    </alternativeName>
</protein>
<gene>
    <name type="primary">coaA</name>
    <name type="ordered locus">HI_0631</name>
</gene>